<accession>P64581</accession>
<accession>P42617</accession>
<accession>Q2M9A8</accession>
<name>YQJD_ECOLI</name>
<dbReference type="EMBL" id="U18997">
    <property type="protein sequence ID" value="AAA57902.1"/>
    <property type="molecule type" value="Genomic_DNA"/>
</dbReference>
<dbReference type="EMBL" id="U00096">
    <property type="protein sequence ID" value="AAC76133.1"/>
    <property type="molecule type" value="Genomic_DNA"/>
</dbReference>
<dbReference type="EMBL" id="AP009048">
    <property type="protein sequence ID" value="BAE77148.1"/>
    <property type="molecule type" value="Genomic_DNA"/>
</dbReference>
<dbReference type="PIR" id="G65098">
    <property type="entry name" value="G65098"/>
</dbReference>
<dbReference type="RefSeq" id="NP_417569.1">
    <property type="nucleotide sequence ID" value="NC_000913.3"/>
</dbReference>
<dbReference type="RefSeq" id="WP_000031415.1">
    <property type="nucleotide sequence ID" value="NZ_STEB01000001.1"/>
</dbReference>
<dbReference type="SMR" id="P64581"/>
<dbReference type="BioGRID" id="4259439">
    <property type="interactions" value="31"/>
</dbReference>
<dbReference type="BioGRID" id="851930">
    <property type="interactions" value="1"/>
</dbReference>
<dbReference type="DIP" id="DIP-47920N"/>
<dbReference type="FunCoup" id="P64581">
    <property type="interactions" value="149"/>
</dbReference>
<dbReference type="IntAct" id="P64581">
    <property type="interactions" value="1"/>
</dbReference>
<dbReference type="STRING" id="511145.b3098"/>
<dbReference type="jPOST" id="P64581"/>
<dbReference type="PaxDb" id="511145-b3098"/>
<dbReference type="EnsemblBacteria" id="AAC76133">
    <property type="protein sequence ID" value="AAC76133"/>
    <property type="gene ID" value="b3098"/>
</dbReference>
<dbReference type="GeneID" id="947614"/>
<dbReference type="KEGG" id="ecj:JW3069"/>
<dbReference type="KEGG" id="eco:b3098"/>
<dbReference type="KEGG" id="ecoc:C3026_16915"/>
<dbReference type="PATRIC" id="fig|511145.12.peg.3194"/>
<dbReference type="EchoBASE" id="EB2599"/>
<dbReference type="eggNOG" id="COG4575">
    <property type="taxonomic scope" value="Bacteria"/>
</dbReference>
<dbReference type="HOGENOM" id="CLU_132623_4_2_6"/>
<dbReference type="InParanoid" id="P64581"/>
<dbReference type="OMA" id="VHENPWK"/>
<dbReference type="OrthoDB" id="6415127at2"/>
<dbReference type="PhylomeDB" id="P64581"/>
<dbReference type="BioCyc" id="EcoCyc:G7612-MONOMER"/>
<dbReference type="PRO" id="PR:P64581"/>
<dbReference type="Proteomes" id="UP000000625">
    <property type="component" value="Chromosome"/>
</dbReference>
<dbReference type="GO" id="GO:0060187">
    <property type="term" value="C:cell pole"/>
    <property type="evidence" value="ECO:0000314"/>
    <property type="project" value="EcoCyc"/>
</dbReference>
<dbReference type="GO" id="GO:0005886">
    <property type="term" value="C:plasma membrane"/>
    <property type="evidence" value="ECO:0000314"/>
    <property type="project" value="EcoCyc"/>
</dbReference>
<dbReference type="GO" id="GO:0043024">
    <property type="term" value="F:ribosomal small subunit binding"/>
    <property type="evidence" value="ECO:0000314"/>
    <property type="project" value="EcoCyc"/>
</dbReference>
<dbReference type="InterPro" id="IPR043605">
    <property type="entry name" value="DUF883_C"/>
</dbReference>
<dbReference type="InterPro" id="IPR043604">
    <property type="entry name" value="DUF883_N"/>
</dbReference>
<dbReference type="InterPro" id="IPR010279">
    <property type="entry name" value="YqjD/ElaB"/>
</dbReference>
<dbReference type="PANTHER" id="PTHR35893:SF3">
    <property type="entry name" value="INNER MEMBRANE PROTEIN"/>
    <property type="match status" value="1"/>
</dbReference>
<dbReference type="PANTHER" id="PTHR35893">
    <property type="entry name" value="INNER MEMBRANE PROTEIN-RELATED"/>
    <property type="match status" value="1"/>
</dbReference>
<dbReference type="Pfam" id="PF05957">
    <property type="entry name" value="DUF883"/>
    <property type="match status" value="1"/>
</dbReference>
<dbReference type="Pfam" id="PF19029">
    <property type="entry name" value="DUF883_C"/>
    <property type="match status" value="1"/>
</dbReference>
<feature type="chain" id="PRO_0000169428" description="Uncharacterized protein YqjD">
    <location>
        <begin position="1"/>
        <end position="101"/>
    </location>
</feature>
<feature type="transmembrane region" description="Helical" evidence="1">
    <location>
        <begin position="81"/>
        <end position="98"/>
    </location>
</feature>
<feature type="region of interest" description="Required for binding to 30S subunits in vitro">
    <location>
        <begin position="1"/>
        <end position="12"/>
    </location>
</feature>
<protein>
    <recommendedName>
        <fullName>Uncharacterized protein YqjD</fullName>
    </recommendedName>
</protein>
<organism>
    <name type="scientific">Escherichia coli (strain K12)</name>
    <dbReference type="NCBI Taxonomy" id="83333"/>
    <lineage>
        <taxon>Bacteria</taxon>
        <taxon>Pseudomonadati</taxon>
        <taxon>Pseudomonadota</taxon>
        <taxon>Gammaproteobacteria</taxon>
        <taxon>Enterobacterales</taxon>
        <taxon>Enterobacteriaceae</taxon>
        <taxon>Escherichia</taxon>
    </lineage>
</organism>
<evidence type="ECO:0000255" key="1"/>
<evidence type="ECO:0000269" key="2">
    <source>
    </source>
</evidence>
<evidence type="ECO:0000269" key="3">
    <source>
    </source>
</evidence>
<evidence type="ECO:0000305" key="4"/>
<gene>
    <name type="primary">yqjD</name>
    <name type="ordered locus">b3098</name>
    <name type="ordered locus">JW3069</name>
</gene>
<comment type="function">
    <text>Upon overexpression inhibits growth.</text>
</comment>
<comment type="subunit">
    <text>Binds to 70S and 100S ribosomes, probably via the 30S subunit.</text>
</comment>
<comment type="subcellular location">
    <subcellularLocation>
        <location evidence="2 3">Cell inner membrane</location>
        <topology evidence="2 3">Single-pass membrane protein</topology>
    </subcellularLocation>
    <text>Predominantly localized to 1 cell pole in stationary phase, with a few smaller foci elsewhere in the cell; polar localization depends on the minCDE operon.</text>
</comment>
<comment type="induction">
    <text evidence="3">Maximally expressed after 2 days growth, i.e. during stationary phase (at protein level). Expression is regulated by RpoS.</text>
</comment>
<comment type="disruption phenotype">
    <text evidence="3">Not essential (in strain K12 / BW25113).</text>
</comment>
<comment type="similarity">
    <text evidence="4">Belongs to the ElaB/YgaM/YqjD family.</text>
</comment>
<proteinExistence type="evidence at protein level"/>
<sequence length="101" mass="11051">MSKEHTTEHLRAELKSLSDTLEEVLSSSGEKSKEELSKIRSKAEQALKQSRYRLGETGDAIAKQTRVAAARADEYVRENPWTGVGIGAAIGVVLGVLLSRR</sequence>
<reference key="1">
    <citation type="journal article" date="1997" name="Science">
        <title>The complete genome sequence of Escherichia coli K-12.</title>
        <authorList>
            <person name="Blattner F.R."/>
            <person name="Plunkett G. III"/>
            <person name="Bloch C.A."/>
            <person name="Perna N.T."/>
            <person name="Burland V."/>
            <person name="Riley M."/>
            <person name="Collado-Vides J."/>
            <person name="Glasner J.D."/>
            <person name="Rode C.K."/>
            <person name="Mayhew G.F."/>
            <person name="Gregor J."/>
            <person name="Davis N.W."/>
            <person name="Kirkpatrick H.A."/>
            <person name="Goeden M.A."/>
            <person name="Rose D.J."/>
            <person name="Mau B."/>
            <person name="Shao Y."/>
        </authorList>
    </citation>
    <scope>NUCLEOTIDE SEQUENCE [LARGE SCALE GENOMIC DNA]</scope>
    <source>
        <strain>K12 / MG1655 / ATCC 47076</strain>
    </source>
</reference>
<reference key="2">
    <citation type="journal article" date="2006" name="Mol. Syst. Biol.">
        <title>Highly accurate genome sequences of Escherichia coli K-12 strains MG1655 and W3110.</title>
        <authorList>
            <person name="Hayashi K."/>
            <person name="Morooka N."/>
            <person name="Yamamoto Y."/>
            <person name="Fujita K."/>
            <person name="Isono K."/>
            <person name="Choi S."/>
            <person name="Ohtsubo E."/>
            <person name="Baba T."/>
            <person name="Wanner B.L."/>
            <person name="Mori H."/>
            <person name="Horiuchi T."/>
        </authorList>
    </citation>
    <scope>NUCLEOTIDE SEQUENCE [LARGE SCALE GENOMIC DNA]</scope>
    <source>
        <strain>K12 / W3110 / ATCC 27325 / DSM 5911</strain>
    </source>
</reference>
<reference key="3">
    <citation type="journal article" date="2012" name="J. Bacteriol.">
        <title>YqjD is an inner membrane protein associated with stationary-phase ribosomes in Escherichia coli.</title>
        <authorList>
            <person name="Yoshida H."/>
            <person name="Maki Y."/>
            <person name="Furuike S."/>
            <person name="Sakai A."/>
            <person name="Ueta M."/>
            <person name="Wada A."/>
        </authorList>
    </citation>
    <scope>RIBOSOME-BINDING</scope>
    <scope>SUBCELLULAR LOCATION</scope>
    <scope>INDUCTION</scope>
    <scope>DISRUPTION PHENOTYPE</scope>
    <source>
        <strain>K12 / BW25113</strain>
        <strain>K12 / W3110 / ATCC 27325 / DSM 5911</strain>
    </source>
</reference>
<reference key="4">
    <citation type="journal article" date="2012" name="Mol. Microbiol.">
        <title>Isolation and identification of new inner membrane-associated proteins that localize to cell poles in Escherichia coli.</title>
        <authorList>
            <person name="Li G."/>
            <person name="Young K.D."/>
        </authorList>
    </citation>
    <scope>SUBCELLULAR LOCATION</scope>
    <source>
        <strain>K12 / MG1655 / ATCC 47076</strain>
    </source>
</reference>
<keyword id="KW-0997">Cell inner membrane</keyword>
<keyword id="KW-1003">Cell membrane</keyword>
<keyword id="KW-0472">Membrane</keyword>
<keyword id="KW-1185">Reference proteome</keyword>
<keyword id="KW-0812">Transmembrane</keyword>
<keyword id="KW-1133">Transmembrane helix</keyword>